<keyword id="KW-0007">Acetylation</keyword>
<keyword id="KW-0238">DNA-binding</keyword>
<keyword id="KW-0509">mRNA transport</keyword>
<keyword id="KW-0539">Nucleus</keyword>
<keyword id="KW-0694">RNA-binding</keyword>
<keyword id="KW-0813">Transport</keyword>
<gene>
    <name type="primary">YRA2</name>
    <name type="ORF">AWRI796_2769</name>
</gene>
<feature type="chain" id="PRO_0000409547" description="RNA annealing protein YRA2">
    <location>
        <begin position="1"/>
        <end position="203"/>
    </location>
</feature>
<feature type="domain" description="RRM" evidence="3">
    <location>
        <begin position="64"/>
        <end position="138"/>
    </location>
</feature>
<feature type="region of interest" description="Disordered" evidence="4">
    <location>
        <begin position="1"/>
        <end position="60"/>
    </location>
</feature>
<feature type="region of interest" description="Disordered" evidence="4">
    <location>
        <begin position="134"/>
        <end position="203"/>
    </location>
</feature>
<feature type="compositionally biased region" description="Polar residues" evidence="4">
    <location>
        <begin position="11"/>
        <end position="20"/>
    </location>
</feature>
<feature type="compositionally biased region" description="Basic and acidic residues" evidence="4">
    <location>
        <begin position="47"/>
        <end position="60"/>
    </location>
</feature>
<feature type="compositionally biased region" description="Basic residues" evidence="4">
    <location>
        <begin position="139"/>
        <end position="153"/>
    </location>
</feature>
<feature type="compositionally biased region" description="Basic residues" evidence="4">
    <location>
        <begin position="163"/>
        <end position="180"/>
    </location>
</feature>
<feature type="modified residue" description="N-acetylmethionine" evidence="2">
    <location>
        <position position="1"/>
    </location>
</feature>
<protein>
    <recommendedName>
        <fullName>RNA annealing protein YRA2</fullName>
    </recommendedName>
</protein>
<dbReference type="EMBL" id="ADVS01000035">
    <property type="protein sequence ID" value="EGA74085.1"/>
    <property type="molecule type" value="Genomic_DNA"/>
</dbReference>
<dbReference type="SMR" id="E7KEM9"/>
<dbReference type="HOGENOM" id="CLU_1346109_0_0_1"/>
<dbReference type="OMA" id="KQTAQEH"/>
<dbReference type="OrthoDB" id="1099063at2759"/>
<dbReference type="GO" id="GO:0005634">
    <property type="term" value="C:nucleus"/>
    <property type="evidence" value="ECO:0007669"/>
    <property type="project" value="UniProtKB-SubCell"/>
</dbReference>
<dbReference type="GO" id="GO:0003677">
    <property type="term" value="F:DNA binding"/>
    <property type="evidence" value="ECO:0007669"/>
    <property type="project" value="UniProtKB-KW"/>
</dbReference>
<dbReference type="GO" id="GO:0003723">
    <property type="term" value="F:RNA binding"/>
    <property type="evidence" value="ECO:0007669"/>
    <property type="project" value="UniProtKB-KW"/>
</dbReference>
<dbReference type="GO" id="GO:0051028">
    <property type="term" value="P:mRNA transport"/>
    <property type="evidence" value="ECO:0007669"/>
    <property type="project" value="UniProtKB-KW"/>
</dbReference>
<dbReference type="CDD" id="cd12295">
    <property type="entry name" value="RRM_YRA2"/>
    <property type="match status" value="1"/>
</dbReference>
<dbReference type="FunFam" id="3.30.70.330:FF:000793">
    <property type="entry name" value="RNA annealing protein YRA2"/>
    <property type="match status" value="1"/>
</dbReference>
<dbReference type="Gene3D" id="3.30.70.330">
    <property type="match status" value="1"/>
</dbReference>
<dbReference type="InterPro" id="IPR025715">
    <property type="entry name" value="FoP_C"/>
</dbReference>
<dbReference type="InterPro" id="IPR012677">
    <property type="entry name" value="Nucleotide-bd_a/b_plait_sf"/>
</dbReference>
<dbReference type="InterPro" id="IPR035979">
    <property type="entry name" value="RBD_domain_sf"/>
</dbReference>
<dbReference type="InterPro" id="IPR000504">
    <property type="entry name" value="RRM_dom"/>
</dbReference>
<dbReference type="InterPro" id="IPR034396">
    <property type="entry name" value="Yra2_RRM"/>
</dbReference>
<dbReference type="Pfam" id="PF13865">
    <property type="entry name" value="FoP_duplication"/>
    <property type="match status" value="1"/>
</dbReference>
<dbReference type="Pfam" id="PF00076">
    <property type="entry name" value="RRM_1"/>
    <property type="match status" value="1"/>
</dbReference>
<dbReference type="SMART" id="SM00360">
    <property type="entry name" value="RRM"/>
    <property type="match status" value="1"/>
</dbReference>
<dbReference type="SUPFAM" id="SSF54928">
    <property type="entry name" value="RNA-binding domain, RBD"/>
    <property type="match status" value="1"/>
</dbReference>
<dbReference type="PROSITE" id="PS50102">
    <property type="entry name" value="RRM"/>
    <property type="match status" value="1"/>
</dbReference>
<sequence length="203" mass="23797">MDKAFDEIIGNSHTDSSSNHKVTRYRRRDLRNELGPRLGFAPSDAASRSKDRLYREREEPPLPKRIRISKIPLDVSDYTLDDMIKEFGSPIFSKIFDNKEDRTCIYEFEDPEVLEKIVERYNGHELHNAKIEVEIYQPQRKHSRMNAHNRRKQTAQEQGRGRPGSHYRQRPNRVSKKNKGREKNNTPTSVEALDAELDAYMKG</sequence>
<name>YRA2_YEASA</name>
<proteinExistence type="inferred from homology"/>
<evidence type="ECO:0000250" key="1"/>
<evidence type="ECO:0000250" key="2">
    <source>
        <dbReference type="UniProtKB" id="P36036"/>
    </source>
</evidence>
<evidence type="ECO:0000255" key="3">
    <source>
        <dbReference type="PROSITE-ProRule" id="PRU00176"/>
    </source>
</evidence>
<evidence type="ECO:0000256" key="4">
    <source>
        <dbReference type="SAM" id="MobiDB-lite"/>
    </source>
</evidence>
<evidence type="ECO:0000305" key="5"/>
<comment type="function">
    <text evidence="1">Involved in export of poly(A) mRNAs from the nucleus. Recruited to the coding sequences as well as poly-A sites of active genes (By similarity).</text>
</comment>
<comment type="subunit">
    <text evidence="1">Associates with mRNPs. Interacts with YRA1.</text>
</comment>
<comment type="subcellular location">
    <subcellularLocation>
        <location evidence="1">Nucleus</location>
    </subcellularLocation>
</comment>
<comment type="similarity">
    <text evidence="5">Belongs to the YRA1 family.</text>
</comment>
<organism>
    <name type="scientific">Saccharomyces cerevisiae (strain AWRI796)</name>
    <name type="common">Baker's yeast</name>
    <dbReference type="NCBI Taxonomy" id="764097"/>
    <lineage>
        <taxon>Eukaryota</taxon>
        <taxon>Fungi</taxon>
        <taxon>Dikarya</taxon>
        <taxon>Ascomycota</taxon>
        <taxon>Saccharomycotina</taxon>
        <taxon>Saccharomycetes</taxon>
        <taxon>Saccharomycetales</taxon>
        <taxon>Saccharomycetaceae</taxon>
        <taxon>Saccharomyces</taxon>
    </lineage>
</organism>
<reference key="1">
    <citation type="journal article" date="2011" name="PLoS Genet.">
        <title>Whole-genome comparison reveals novel genetic elements that characterize the genome of industrial strains of Saccharomyces cerevisiae.</title>
        <authorList>
            <person name="Borneman A.R."/>
            <person name="Desany B.A."/>
            <person name="Riches D."/>
            <person name="Affourtit J.P."/>
            <person name="Forgan A.H."/>
            <person name="Pretorius I.S."/>
            <person name="Egholm M."/>
            <person name="Chambers P.J."/>
        </authorList>
    </citation>
    <scope>NUCLEOTIDE SEQUENCE [LARGE SCALE GENOMIC DNA]</scope>
    <source>
        <strain>AWRI796</strain>
    </source>
</reference>
<accession>E7KEM9</accession>